<protein>
    <recommendedName>
        <fullName>Outer membrane protein TolC</fullName>
    </recommendedName>
    <alternativeName>
        <fullName>Multidrug efflux pump subunit TolC</fullName>
    </alternativeName>
</protein>
<feature type="signal peptide" evidence="1">
    <location>
        <begin position="1"/>
        <end position="24"/>
    </location>
</feature>
<feature type="chain" id="PRO_0000013353" description="Outer membrane protein TolC">
    <location>
        <begin position="25"/>
        <end position="491"/>
    </location>
</feature>
<feature type="region of interest" description="Disordered" evidence="2">
    <location>
        <begin position="267"/>
        <end position="287"/>
    </location>
</feature>
<feature type="region of interest" description="Disordered" evidence="2">
    <location>
        <begin position="445"/>
        <end position="491"/>
    </location>
</feature>
<feature type="compositionally biased region" description="Polar residues" evidence="2">
    <location>
        <begin position="272"/>
        <end position="287"/>
    </location>
</feature>
<feature type="compositionally biased region" description="Low complexity" evidence="2">
    <location>
        <begin position="467"/>
        <end position="481"/>
    </location>
</feature>
<feature type="compositionally biased region" description="Polar residues" evidence="2">
    <location>
        <begin position="482"/>
        <end position="491"/>
    </location>
</feature>
<evidence type="ECO:0000250" key="1"/>
<evidence type="ECO:0000256" key="2">
    <source>
        <dbReference type="SAM" id="MobiDB-lite"/>
    </source>
</evidence>
<evidence type="ECO:0000269" key="3">
    <source>
    </source>
</evidence>
<evidence type="ECO:0000305" key="4"/>
<name>TOLC_SALEN</name>
<gene>
    <name type="primary">tolC</name>
    <name type="synonym">sinA</name>
</gene>
<sequence length="491" mass="53726">MQMKKLLPILIGLSLSGFSTLSQAENLMQVYQQARLSNPELRKSAADRDAAFEKINEARSPLLPQLGLGADYTYSNGYRDANGINSNETSASLQLTQTLFDMSKWRGLTLQEKAAGIQDVTYQTDQQTLILNTANAYFKVLNAIDVLSYTQAQKEAIYRQLDQTTQRFNVGLVAITDVQNARAQYDTVLANEVTVRNNLDNAVEELRQVTGNYYPELASLNVEHFKTDKPKAVNALLKEAENRNLSLLQARLSQDLAREQIRQAQDGHLPTLNLTPSTGISDTSYSGSKTNAAQYDDSNMGQNKIGLNFSLPLYQGGMVNSQVKQAQYNFVGASEQLESAHRSVVQTVRSSFNNINASISSINAYKQAVVSAQSSLDAMEAGYSVGTRTIVDVLDATTTLYDAKQQLANARYTYLINQLNIKYALGTLNEQDLLALNSTLGKPIPTSPESVAPETPDQDCAADGYNAHSAAPAVQPTAARANSNNGNPFRH</sequence>
<comment type="function">
    <text evidence="1 3">Outer membrane channel, which is required for the function of several efflux systems (By similarity). Required for virulence.</text>
</comment>
<comment type="subunit">
    <text evidence="1">Homotrimer. Part of tripartite efflux systems, which are composed of an inner membrane transporter, a periplasmic membrane fusion protein, and an outer membrane component, TolC. The complexes form a large protein conduit and can translocate molecules across both the inner and outer membranes (By similarity).</text>
</comment>
<comment type="subcellular location">
    <subcellularLocation>
        <location evidence="1">Cell outer membrane</location>
        <topology evidence="1">Multi-pass membrane protein</topology>
    </subcellularLocation>
</comment>
<comment type="induction">
    <text evidence="3">Constitutively expressed (at protein level).</text>
</comment>
<comment type="disruption phenotype">
    <text evidence="3">Non-invasive for a number of mammalian cell lines; avirulent by oral infection of BALB/c mice. Increased sensitivity to acridine orange and novibiocin. Decreased resistance to bile salts and SDS.</text>
</comment>
<comment type="similarity">
    <text evidence="4">Belongs to the outer membrane factor (OMF) (TC 1.B.17) family.</text>
</comment>
<reference key="1">
    <citation type="journal article" date="1995" name="Mol. Microbiol.">
        <title>Salmonella enteritidis has a homologue of tolC that is required for virulence in BALB/c mice.</title>
        <authorList>
            <person name="Stone B.J."/>
            <person name="Miller V.L."/>
        </authorList>
    </citation>
    <scope>NUCLEOTIDE SEQUENCE [GENOMIC DNA]</scope>
    <scope>FUNCTION</scope>
    <scope>INDUCTION</scope>
    <scope>DISRUPTION PHENOTYPE</scope>
    <source>
        <strain>CDC5</strain>
    </source>
</reference>
<organism>
    <name type="scientific">Salmonella enteritidis</name>
    <dbReference type="NCBI Taxonomy" id="149539"/>
    <lineage>
        <taxon>Bacteria</taxon>
        <taxon>Pseudomonadati</taxon>
        <taxon>Pseudomonadota</taxon>
        <taxon>Gammaproteobacteria</taxon>
        <taxon>Enterobacterales</taxon>
        <taxon>Enterobacteriaceae</taxon>
        <taxon>Salmonella</taxon>
    </lineage>
</organism>
<accession>Q54001</accession>
<proteinExistence type="evidence at protein level"/>
<keyword id="KW-0046">Antibiotic resistance</keyword>
<keyword id="KW-0998">Cell outer membrane</keyword>
<keyword id="KW-0472">Membrane</keyword>
<keyword id="KW-0732">Signal</keyword>
<keyword id="KW-0812">Transmembrane</keyword>
<keyword id="KW-1134">Transmembrane beta strand</keyword>
<keyword id="KW-0813">Transport</keyword>
<keyword id="KW-0843">Virulence</keyword>
<dbReference type="EMBL" id="U25178">
    <property type="protein sequence ID" value="AAC43973.1"/>
    <property type="molecule type" value="Genomic_DNA"/>
</dbReference>
<dbReference type="PIR" id="S70190">
    <property type="entry name" value="S70190"/>
</dbReference>
<dbReference type="SMR" id="Q54001"/>
<dbReference type="PHI-base" id="PHI:6553"/>
<dbReference type="GO" id="GO:0009279">
    <property type="term" value="C:cell outer membrane"/>
    <property type="evidence" value="ECO:0007669"/>
    <property type="project" value="UniProtKB-SubCell"/>
</dbReference>
<dbReference type="GO" id="GO:1990281">
    <property type="term" value="C:efflux pump complex"/>
    <property type="evidence" value="ECO:0007669"/>
    <property type="project" value="TreeGrafter"/>
</dbReference>
<dbReference type="GO" id="GO:0015562">
    <property type="term" value="F:efflux transmembrane transporter activity"/>
    <property type="evidence" value="ECO:0007669"/>
    <property type="project" value="InterPro"/>
</dbReference>
<dbReference type="GO" id="GO:0015288">
    <property type="term" value="F:porin activity"/>
    <property type="evidence" value="ECO:0007669"/>
    <property type="project" value="TreeGrafter"/>
</dbReference>
<dbReference type="GO" id="GO:0046677">
    <property type="term" value="P:response to antibiotic"/>
    <property type="evidence" value="ECO:0007669"/>
    <property type="project" value="UniProtKB-KW"/>
</dbReference>
<dbReference type="FunFam" id="1.20.1600.10:FF:000001">
    <property type="entry name" value="TolC outer membrane channel"/>
    <property type="match status" value="1"/>
</dbReference>
<dbReference type="Gene3D" id="1.20.1600.10">
    <property type="entry name" value="Outer membrane efflux proteins (OEP)"/>
    <property type="match status" value="1"/>
</dbReference>
<dbReference type="InterPro" id="IPR051906">
    <property type="entry name" value="Bacterial_OMF"/>
</dbReference>
<dbReference type="InterPro" id="IPR003423">
    <property type="entry name" value="OMP_efflux"/>
</dbReference>
<dbReference type="InterPro" id="IPR010130">
    <property type="entry name" value="T1SS_OMP_TolC"/>
</dbReference>
<dbReference type="NCBIfam" id="NF007002">
    <property type="entry name" value="PRK09465.1"/>
    <property type="match status" value="1"/>
</dbReference>
<dbReference type="NCBIfam" id="TIGR01844">
    <property type="entry name" value="type_I_sec_TolC"/>
    <property type="match status" value="1"/>
</dbReference>
<dbReference type="PANTHER" id="PTHR30026">
    <property type="entry name" value="OUTER MEMBRANE PROTEIN TOLC"/>
    <property type="match status" value="1"/>
</dbReference>
<dbReference type="PANTHER" id="PTHR30026:SF20">
    <property type="entry name" value="OUTER MEMBRANE PROTEIN TOLC"/>
    <property type="match status" value="1"/>
</dbReference>
<dbReference type="Pfam" id="PF02321">
    <property type="entry name" value="OEP"/>
    <property type="match status" value="2"/>
</dbReference>
<dbReference type="SUPFAM" id="SSF56954">
    <property type="entry name" value="Outer membrane efflux proteins (OEP)"/>
    <property type="match status" value="1"/>
</dbReference>